<evidence type="ECO:0000250" key="1">
    <source>
        <dbReference type="UniProtKB" id="P0DTL6"/>
    </source>
</evidence>
<evidence type="ECO:0000250" key="2">
    <source>
        <dbReference type="UniProtKB" id="Q9QXA1"/>
    </source>
</evidence>
<evidence type="ECO:0000256" key="3">
    <source>
        <dbReference type="SAM" id="MobiDB-lite"/>
    </source>
</evidence>
<evidence type="ECO:0000305" key="4"/>
<gene>
    <name evidence="1" type="primary">ZFTRAF1</name>
    <name type="synonym">CYHR1</name>
</gene>
<reference key="1">
    <citation type="journal article" date="2004" name="Genomics">
        <title>Assessment of the gene content of the chromosomal regions flanking bovine DGAT1.</title>
        <authorList>
            <person name="Winter A."/>
            <person name="Alzinger A."/>
            <person name="Fries R."/>
        </authorList>
    </citation>
    <scope>NUCLEOTIDE SEQUENCE [GENOMIC DNA] OF 130-410</scope>
</reference>
<reference key="2">
    <citation type="journal article" date="2009" name="Science">
        <title>The genome sequence of taurine cattle: a window to ruminant biology and evolution.</title>
        <authorList>
            <consortium name="The bovine genome sequencing and analysis consortium"/>
        </authorList>
    </citation>
    <scope>NUCLEOTIDE SEQUENCE [LARGE SCALE GENOMIC DNA]</scope>
    <source>
        <strain>Hereford</strain>
    </source>
</reference>
<reference key="3">
    <citation type="journal article" date="2003" name="J. Anim. Breed. Genet.">
        <title>The sequence of the bovine cysteine- and histidine-rich cytoplasmic gene: EST puzzle solving by comparative assembly and confirmation by genomic sequencing.</title>
        <authorList>
            <person name="Craig J.A."/>
            <person name="Sharma B.S."/>
            <person name="Jiang Z."/>
        </authorList>
    </citation>
    <scope>NUCLEOTIDE SEQUENCE [GENOMIC DNA] OF 130-410</scope>
</reference>
<name>ZTRF1_BOVIN</name>
<proteinExistence type="inferred from homology"/>
<dbReference type="EMBL" id="AJ518952">
    <property type="protein sequence ID" value="CAD58789.1"/>
    <property type="status" value="ALT_INIT"/>
    <property type="molecule type" value="Genomic_DNA"/>
</dbReference>
<dbReference type="EMBL" id="AJ518967">
    <property type="protein sequence ID" value="CAD58804.1"/>
    <property type="molecule type" value="Genomic_DNA"/>
</dbReference>
<dbReference type="EMBL" id="AJ518969">
    <property type="protein sequence ID" value="CAD58806.1"/>
    <property type="status" value="ALT_SEQ"/>
    <property type="molecule type" value="Genomic_DNA"/>
</dbReference>
<dbReference type="EMBL" id="NKLS02000014">
    <property type="status" value="NOT_ANNOTATED_CDS"/>
    <property type="molecule type" value="Genomic_DNA"/>
</dbReference>
<dbReference type="EMBL" id="AY129504">
    <property type="protein sequence ID" value="AAM89496.1"/>
    <property type="status" value="ALT_INIT"/>
    <property type="molecule type" value="Genomic_DNA"/>
</dbReference>
<dbReference type="EMBL" id="AY129503">
    <property type="protein sequence ID" value="AAM89496.1"/>
    <property type="status" value="JOINED"/>
    <property type="molecule type" value="Genomic_DNA"/>
</dbReference>
<dbReference type="Ensembl" id="ENSBTAT00000133298.1">
    <property type="protein sequence ID" value="ENSBTAP00000095950.1"/>
    <property type="gene ID" value="ENSBTAG00000035254.5"/>
</dbReference>
<dbReference type="VGNC" id="VGNC:50269">
    <property type="gene designation" value="CYHR1"/>
</dbReference>
<dbReference type="GeneTree" id="ENSGT00390000018258"/>
<dbReference type="HOGENOM" id="CLU_035849_0_0_1"/>
<dbReference type="OrthoDB" id="10062218at2759"/>
<dbReference type="TreeFam" id="TF324281"/>
<dbReference type="Proteomes" id="UP000009136">
    <property type="component" value="Chromosome 14"/>
</dbReference>
<dbReference type="GO" id="GO:0005634">
    <property type="term" value="C:nucleus"/>
    <property type="evidence" value="ECO:0000318"/>
    <property type="project" value="GO_Central"/>
</dbReference>
<dbReference type="GO" id="GO:0048471">
    <property type="term" value="C:perinuclear region of cytoplasm"/>
    <property type="evidence" value="ECO:0007669"/>
    <property type="project" value="UniProtKB-SubCell"/>
</dbReference>
<dbReference type="GO" id="GO:0008270">
    <property type="term" value="F:zinc ion binding"/>
    <property type="evidence" value="ECO:0007669"/>
    <property type="project" value="UniProtKB-KW"/>
</dbReference>
<dbReference type="CDD" id="cd22861">
    <property type="entry name" value="CYHR1_C"/>
    <property type="match status" value="1"/>
</dbReference>
<dbReference type="CDD" id="cd16505">
    <property type="entry name" value="RING-HC_CYHR1"/>
    <property type="match status" value="1"/>
</dbReference>
<dbReference type="FunFam" id="3.30.40.10:FF:000498">
    <property type="entry name" value="Cysteine and histidine rich 1"/>
    <property type="match status" value="1"/>
</dbReference>
<dbReference type="Gene3D" id="3.30.40.10">
    <property type="entry name" value="Zinc/RING finger domain, C3HC4 (zinc finger)"/>
    <property type="match status" value="1"/>
</dbReference>
<dbReference type="InterPro" id="IPR049548">
    <property type="entry name" value="Sina-like_RING"/>
</dbReference>
<dbReference type="InterPro" id="IPR039338">
    <property type="entry name" value="ZFTRAF1"/>
</dbReference>
<dbReference type="InterPro" id="IPR001841">
    <property type="entry name" value="Znf_RING"/>
</dbReference>
<dbReference type="InterPro" id="IPR013083">
    <property type="entry name" value="Znf_RING/FYVE/PHD"/>
</dbReference>
<dbReference type="PANTHER" id="PTHR23059">
    <property type="entry name" value="CYSTEINE AND HISTIDINE-RICH PROTEIN 1"/>
    <property type="match status" value="1"/>
</dbReference>
<dbReference type="PANTHER" id="PTHR23059:SF6">
    <property type="entry name" value="ZINC FINGER TRAF-TYPE-CONTAINING PROTEIN 1"/>
    <property type="match status" value="1"/>
</dbReference>
<dbReference type="Pfam" id="PF21362">
    <property type="entry name" value="Sina_RING"/>
    <property type="match status" value="1"/>
</dbReference>
<dbReference type="SUPFAM" id="SSF57850">
    <property type="entry name" value="RING/U-box"/>
    <property type="match status" value="1"/>
</dbReference>
<dbReference type="SUPFAM" id="SSF49599">
    <property type="entry name" value="TRAF domain-like"/>
    <property type="match status" value="1"/>
</dbReference>
<dbReference type="PROSITE" id="PS50089">
    <property type="entry name" value="ZF_RING_2"/>
    <property type="match status" value="1"/>
</dbReference>
<accession>P0DW91</accession>
<accession>Q3SX19</accession>
<accession>Q7YR89</accession>
<accession>Q7YR91</accession>
<accession>Q7YRA6</accession>
<accession>Q8MK42</accession>
<organism>
    <name type="scientific">Bos taurus</name>
    <name type="common">Bovine</name>
    <dbReference type="NCBI Taxonomy" id="9913"/>
    <lineage>
        <taxon>Eukaryota</taxon>
        <taxon>Metazoa</taxon>
        <taxon>Chordata</taxon>
        <taxon>Craniata</taxon>
        <taxon>Vertebrata</taxon>
        <taxon>Euteleostomi</taxon>
        <taxon>Mammalia</taxon>
        <taxon>Eutheria</taxon>
        <taxon>Laurasiatheria</taxon>
        <taxon>Artiodactyla</taxon>
        <taxon>Ruminantia</taxon>
        <taxon>Pecora</taxon>
        <taxon>Bovidae</taxon>
        <taxon>Bovinae</taxon>
        <taxon>Bos</taxon>
    </lineage>
</organism>
<feature type="chain" id="PRO_0000328851" description="Zinc finger TRAF-type-containing protein 1">
    <location>
        <begin position="1"/>
        <end position="410"/>
    </location>
</feature>
<feature type="zinc finger region" description="RING-type; degenerate">
    <location>
        <begin position="117"/>
        <end position="162"/>
    </location>
</feature>
<feature type="zinc finger region" description="TRAF-type">
    <location>
        <begin position="158"/>
        <end position="231"/>
    </location>
</feature>
<feature type="region of interest" description="Disordered" evidence="3">
    <location>
        <begin position="1"/>
        <end position="22"/>
    </location>
</feature>
<feature type="compositionally biased region" description="Gly residues" evidence="3">
    <location>
        <begin position="1"/>
        <end position="13"/>
    </location>
</feature>
<sequence length="410" mass="44085">MSGAEEAGGGGPAAGPAGSVPAGVGVGAGAGAGVGVGAGPGAAAGPAAAAALGEAAGPGLPDEAGLAGARQLQEAAGDPDAPPKKRLRAAEAAEAAAAAAAAGSGKLEERLYSVLCCTVCLDLPKASVYQCTNGHLMCAGCFIHLLADARLKEEQATCPNCRCEISKSLCCRNLAVEKAVSELPSECGFCLCQFPRSILERHQKEECQDRVTQCKYKRIGCPWHGPFHELTVHEAACAHPTKTGNELMEILDEMDQSHRKEMQLYNSIFSLLSFEKIGYTEVQFRPYRTDDFITRLYYETPRFTVLNQTWVLKARVNDSERNPNLSCKRTLSFQLLLKSKVTAPLECSFLLLKGPYDDVKISPVIYHFVFTNESNETDYVPLPIVDSVECNKLLAAKNINLRLFLFQIQK</sequence>
<keyword id="KW-0963">Cytoplasm</keyword>
<keyword id="KW-0479">Metal-binding</keyword>
<keyword id="KW-1185">Reference proteome</keyword>
<keyword id="KW-0862">Zinc</keyword>
<keyword id="KW-0863">Zinc-finger</keyword>
<comment type="subunit">
    <text evidence="2">Interacts with LGALS3.</text>
</comment>
<comment type="subcellular location">
    <subcellularLocation>
        <location evidence="2">Cytoplasm</location>
    </subcellularLocation>
    <subcellularLocation>
        <location evidence="2">Cytoplasm</location>
        <location evidence="2">Perinuclear region</location>
    </subcellularLocation>
    <text evidence="2">Shows a prominent perinuclear and cytoplasmic localization.</text>
</comment>
<comment type="similarity">
    <text evidence="4">Belongs to the ZFTRAF1 family.</text>
</comment>
<comment type="sequence caution" evidence="4">
    <conflict type="erroneous initiation">
        <sequence resource="EMBL-CDS" id="AAM89496"/>
    </conflict>
    <text>Truncated N-terminus.</text>
</comment>
<comment type="sequence caution" evidence="4">
    <conflict type="erroneous initiation">
        <sequence resource="EMBL-CDS" id="CAD58789"/>
    </conflict>
    <text>Truncated N-terminus.</text>
</comment>
<comment type="sequence caution" evidence="4">
    <conflict type="erroneous gene model prediction">
        <sequence resource="EMBL-CDS" id="CAD58806"/>
    </conflict>
</comment>
<protein>
    <recommendedName>
        <fullName evidence="1">Zinc finger TRAF-type-containing protein 1</fullName>
    </recommendedName>
    <alternativeName>
        <fullName>Cysteine and histidine-rich protein 1</fullName>
    </alternativeName>
</protein>